<reference key="1">
    <citation type="journal article" date="2007" name="J. Virol.">
        <title>Identification of novel rodent herpesviruses, including the first gammaherpesvirus of Mus musculus.</title>
        <authorList>
            <person name="Ehlers B."/>
            <person name="Kuchler J."/>
            <person name="Yasmum N."/>
            <person name="Dural G."/>
            <person name="Voigt S."/>
            <person name="Schmidt-Chanasit J."/>
            <person name="Jakel T."/>
            <person name="Matuschka F.R."/>
            <person name="Richter D."/>
            <person name="Essbauer S."/>
            <person name="Hughes D.J."/>
            <person name="Summers C."/>
            <person name="Bennett M."/>
            <person name="Stewart J.P."/>
            <person name="Ulrich R.G."/>
        </authorList>
    </citation>
    <scope>NUCLEOTIDE SEQUENCE [GENOMIC DNA]</scope>
</reference>
<reference key="2">
    <citation type="journal article" date="2001" name="J. Gen. Virol.">
        <title>Genetic and ultrastructural characterization of a European isolate of the fatal endotheliotropic elephant herpesvirus.</title>
        <authorList>
            <person name="Ehlers B."/>
            <person name="Burkhardt S."/>
            <person name="Goltz M."/>
            <person name="Bergmann V."/>
            <person name="Ochs A."/>
            <person name="Weiler H."/>
            <person name="Hentschke J."/>
        </authorList>
    </citation>
    <scope>NUCLEOTIDE SEQUENCE [GENOMIC DNA]</scope>
</reference>
<feature type="signal peptide" evidence="2">
    <location>
        <begin position="1"/>
        <end position="41"/>
    </location>
</feature>
<feature type="chain" id="PRO_0000408177" description="Envelope glycoprotein B">
    <location>
        <begin position="42"/>
        <end position="845"/>
    </location>
</feature>
<feature type="topological domain" description="Virion surface" evidence="3">
    <location>
        <begin position="42"/>
        <end position="727"/>
    </location>
</feature>
<feature type="transmembrane region" description="Helical" evidence="3">
    <location>
        <begin position="728"/>
        <end position="748"/>
    </location>
</feature>
<feature type="topological domain" description="Intravirion" evidence="3">
    <location>
        <begin position="749"/>
        <end position="845"/>
    </location>
</feature>
<feature type="region of interest" description="Involved in fusion and/or binding to host membrane" evidence="3">
    <location>
        <begin position="120"/>
        <end position="126"/>
    </location>
</feature>
<feature type="region of interest" description="Involved in fusion and/or binding to host membrane" evidence="3">
    <location>
        <begin position="204"/>
        <end position="212"/>
    </location>
</feature>
<feature type="region of interest" description="Hydrophobic membrane proximal region" evidence="3">
    <location>
        <begin position="677"/>
        <end position="725"/>
    </location>
</feature>
<feature type="short sequence motif" description="Internalization motif" evidence="3">
    <location>
        <begin position="837"/>
        <end position="840"/>
    </location>
</feature>
<feature type="glycosylation site" description="N-linked (GlcNAc...) asparagine; by host" evidence="3">
    <location>
        <position position="175"/>
    </location>
</feature>
<feature type="glycosylation site" description="N-linked (GlcNAc...) asparagine; by host" evidence="3">
    <location>
        <position position="328"/>
    </location>
</feature>
<feature type="glycosylation site" description="N-linked (GlcNAc...) asparagine; by host" evidence="3">
    <location>
        <position position="388"/>
    </location>
</feature>
<feature type="glycosylation site" description="N-linked (GlcNAc...) asparagine; by host" evidence="3">
    <location>
        <position position="414"/>
    </location>
</feature>
<feature type="glycosylation site" description="N-linked (GlcNAc...) asparagine; by host" evidence="3">
    <location>
        <position position="420"/>
    </location>
</feature>
<feature type="glycosylation site" description="N-linked (GlcNAc...) asparagine; by host" evidence="3">
    <location>
        <position position="425"/>
    </location>
</feature>
<feature type="glycosylation site" description="N-linked (GlcNAc...) asparagine; by host" evidence="3">
    <location>
        <position position="564"/>
    </location>
</feature>
<feature type="glycosylation site" description="N-linked (GlcNAc...) asparagine; by host" evidence="3">
    <location>
        <position position="632"/>
    </location>
</feature>
<feature type="disulfide bond" evidence="3">
    <location>
        <begin position="62"/>
        <end position="523"/>
    </location>
</feature>
<feature type="disulfide bond" evidence="3">
    <location>
        <begin position="80"/>
        <end position="479"/>
    </location>
</feature>
<feature type="disulfide bond" evidence="3">
    <location>
        <begin position="153"/>
        <end position="218"/>
    </location>
</feature>
<feature type="disulfide bond" evidence="3">
    <location>
        <begin position="310"/>
        <end position="358"/>
    </location>
</feature>
<feature type="disulfide bond" evidence="3">
    <location>
        <begin position="552"/>
        <end position="591"/>
    </location>
</feature>
<sequence length="845" mass="96909">MSFTDQTYTRSCMHTCITRDHRLYGIVIISLLLLLDNSVFCQNENKVIDIKKDEKIWPYRICSGMSQATDIVRFGRNIQCPEYSPKDEGTEGILLIYKQNIVPYIFPVRIYYKELTIRYRYADVFSYYDMGDVTKKIPIMETEKTLIDMDGKCYSAARYVEGGAYMDAYDGDEHNHTVPFMLGYQNPDGGVTRYVTVDTHRPCLPGTWLRKTCTTVNCIVTDTYAKSRYPYDFFAISTGEIVDGSPFYTGDNDKKFSETYTKFKVYNEYERLEELTVSSTKKRTFDKIAFLEKRDYSISWEVKEEDQAPCQYVLWKASTQALMTKTVNNTYHFTSRELTATFGANDKEELKLAEKYPCVYEDAKETFEKMFSQNLKDTHVLNNDAKNNYSYVSHGGLILIFKPVKNKEIVQLMNITHLLNNTHANMTKHRRKRETSSSASSKGIYDLYGDLNVAQVQFAFNTLKSYINQALMSIADAWCRDQKRTNEIWGIISKINPSAALSAIFDKPVSARYLGDVISVSKCINVNQDSVRIYQTLKVPKTGEEWGDRMQCYSRPLVTFRLDNETASTIRTGQLGVDNEILLGNYRTELCQENSIRYFVAGAQIHVFQDYDFYHTIKLSDVDIVDTFVHLNISFLQNIDFQMLRLYTQEEQYASRLLDLETLLRDFNTYRQRIYKLEQAIVTKPYVPPAGMQQALQGLSGVGSVITGTLGAMQSLVSGVASFLQNPFGGTLSIILIGCIIVGVIIIYNRMNQSRGSPIDYYFPYVNQTLPQRQLQQHVGDPPSYDESIGSSHTYSKEDALLMLKAMKELDKSEKEAQIEATKSQPSIIDRIRRRGYTTLSSMNI</sequence>
<gene>
    <name evidence="3" type="primary">gB</name>
</gene>
<dbReference type="EMBL" id="AF322977">
    <property type="protein sequence ID" value="AAG41998.1"/>
    <property type="molecule type" value="Genomic_DNA"/>
</dbReference>
<dbReference type="SMR" id="Q77JN0"/>
<dbReference type="GlyCosmos" id="Q77JN0">
    <property type="glycosylation" value="8 sites, No reported glycans"/>
</dbReference>
<dbReference type="GO" id="GO:0044175">
    <property type="term" value="C:host cell endosome membrane"/>
    <property type="evidence" value="ECO:0007669"/>
    <property type="project" value="UniProtKB-SubCell"/>
</dbReference>
<dbReference type="GO" id="GO:0044178">
    <property type="term" value="C:host cell Golgi membrane"/>
    <property type="evidence" value="ECO:0007669"/>
    <property type="project" value="UniProtKB-SubCell"/>
</dbReference>
<dbReference type="GO" id="GO:0020002">
    <property type="term" value="C:host cell plasma membrane"/>
    <property type="evidence" value="ECO:0007669"/>
    <property type="project" value="UniProtKB-SubCell"/>
</dbReference>
<dbReference type="GO" id="GO:0016020">
    <property type="term" value="C:membrane"/>
    <property type="evidence" value="ECO:0007669"/>
    <property type="project" value="UniProtKB-KW"/>
</dbReference>
<dbReference type="GO" id="GO:0019031">
    <property type="term" value="C:viral envelope"/>
    <property type="evidence" value="ECO:0007669"/>
    <property type="project" value="UniProtKB-KW"/>
</dbReference>
<dbReference type="GO" id="GO:0055036">
    <property type="term" value="C:virion membrane"/>
    <property type="evidence" value="ECO:0007669"/>
    <property type="project" value="UniProtKB-SubCell"/>
</dbReference>
<dbReference type="GO" id="GO:0046718">
    <property type="term" value="P:symbiont entry into host cell"/>
    <property type="evidence" value="ECO:0007669"/>
    <property type="project" value="UniProtKB-KW"/>
</dbReference>
<dbReference type="GO" id="GO:0019062">
    <property type="term" value="P:virion attachment to host cell"/>
    <property type="evidence" value="ECO:0007669"/>
    <property type="project" value="UniProtKB-KW"/>
</dbReference>
<dbReference type="Gene3D" id="1.20.5.1890">
    <property type="match status" value="1"/>
</dbReference>
<dbReference type="Gene3D" id="2.30.29.100">
    <property type="match status" value="1"/>
</dbReference>
<dbReference type="Gene3D" id="2.30.30.1230">
    <property type="match status" value="1"/>
</dbReference>
<dbReference type="Gene3D" id="6.10.250.3280">
    <property type="match status" value="1"/>
</dbReference>
<dbReference type="HAMAP" id="MF_04032">
    <property type="entry name" value="HSV_GB"/>
    <property type="match status" value="1"/>
</dbReference>
<dbReference type="InterPro" id="IPR035377">
    <property type="entry name" value="Glycoprot_B_PH1"/>
</dbReference>
<dbReference type="InterPro" id="IPR035381">
    <property type="entry name" value="Glycoprot_B_PH2"/>
</dbReference>
<dbReference type="InterPro" id="IPR038631">
    <property type="entry name" value="Glycoprot_B_PH2_sf"/>
</dbReference>
<dbReference type="InterPro" id="IPR055341">
    <property type="entry name" value="Glycoprotein_B_ecto_C"/>
</dbReference>
<dbReference type="InterPro" id="IPR000234">
    <property type="entry name" value="Herpes_Glycoprot_B"/>
</dbReference>
<dbReference type="Pfam" id="PF17416">
    <property type="entry name" value="Glycoprot_B_PH1"/>
    <property type="match status" value="1"/>
</dbReference>
<dbReference type="Pfam" id="PF17417">
    <property type="entry name" value="Glycoprot_B_PH2"/>
    <property type="match status" value="1"/>
</dbReference>
<dbReference type="Pfam" id="PF00606">
    <property type="entry name" value="Glycoprotein_B"/>
    <property type="match status" value="1"/>
</dbReference>
<dbReference type="SUPFAM" id="SSF161008">
    <property type="entry name" value="Viral glycoprotein ectodomain-like"/>
    <property type="match status" value="1"/>
</dbReference>
<protein>
    <recommendedName>
        <fullName evidence="3">Envelope glycoprotein B</fullName>
        <shortName evidence="3">gB</shortName>
    </recommendedName>
</protein>
<organismHost>
    <name type="scientific">Elephas maximus</name>
    <name type="common">Indian elephant</name>
    <dbReference type="NCBI Taxonomy" id="9783"/>
</organismHost>
<organismHost>
    <name type="scientific">Loxodonta africana</name>
    <name type="common">African elephant</name>
    <dbReference type="NCBI Taxonomy" id="9785"/>
</organismHost>
<organismHost>
    <name type="scientific">Loxodonta cyclotis</name>
    <name type="common">African forest elephant</name>
    <dbReference type="NCBI Taxonomy" id="99490"/>
</organismHost>
<comment type="function">
    <text evidence="3">Envelope glycoprotein that forms spikes at the surface of virion envelope. Essential for the initial attachment to heparan sulfate moieties of the host cell surface proteoglycans. Involved in fusion of viral and cellular membranes leading to virus entry into the host cell. Following initial binding to its host receptors, membrane fusion is mediated by the fusion machinery composed at least of gB and the heterodimer gH/gL. May be involved in the fusion between the virion envelope and the outer nuclear membrane during virion egress.</text>
</comment>
<comment type="subunit">
    <text evidence="3">Homotrimer; disulfide-linked. Binds to heparan sulfate proteoglycans. Interacts with gH/gL heterodimer.</text>
</comment>
<comment type="subcellular location">
    <subcellularLocation>
        <location evidence="3">Virion membrane</location>
        <topology evidence="3">Single-pass type I membrane protein</topology>
    </subcellularLocation>
    <subcellularLocation>
        <location evidence="3">Host cell membrane</location>
        <topology evidence="3">Single-pass type I membrane protein</topology>
    </subcellularLocation>
    <subcellularLocation>
        <location evidence="3">Host endosome membrane</location>
        <topology evidence="3">Single-pass type I membrane protein</topology>
    </subcellularLocation>
    <subcellularLocation>
        <location evidence="3">Host Golgi apparatus membrane</location>
        <topology evidence="3">Single-pass type I membrane protein</topology>
    </subcellularLocation>
    <text evidence="3">During virion morphogenesis, this protein probably accumulates in the endosomes and trans-Golgi where secondary envelopment occurs. It is probably transported to the cell surface from where it is endocytosed and directed to the trans-Golgi network (TGN).</text>
</comment>
<comment type="PTM">
    <text evidence="1">A proteolytic cleavage by host furin generates two subunits that remain linked by disulfide bonds.</text>
</comment>
<comment type="similarity">
    <text evidence="3">Belongs to the herpesviridae glycoprotein B family.</text>
</comment>
<organism>
    <name type="scientific">Elephantid herpesvirus 1 (isolate Asian elephant/Berlin/Kiba/1998)</name>
    <name type="common">EIHV-1</name>
    <name type="synonym">Elephant endotheliotropic herpesvirus</name>
    <dbReference type="NCBI Taxonomy" id="654902"/>
    <lineage>
        <taxon>Viruses</taxon>
        <taxon>Duplodnaviria</taxon>
        <taxon>Heunggongvirae</taxon>
        <taxon>Peploviricota</taxon>
        <taxon>Herviviricetes</taxon>
        <taxon>Herpesvirales</taxon>
        <taxon>Orthoherpesviridae</taxon>
        <taxon>Betaherpesvirinae</taxon>
        <taxon>Proboscivirus</taxon>
        <taxon>Proboscivirus elephantidbeta1</taxon>
        <taxon>Elephantid herpesvirus 1</taxon>
    </lineage>
</organism>
<proteinExistence type="inferred from homology"/>
<accession>Q77JN0</accession>
<name>GB_ELHVK</name>
<evidence type="ECO:0000250" key="1"/>
<evidence type="ECO:0000255" key="2"/>
<evidence type="ECO:0000255" key="3">
    <source>
        <dbReference type="HAMAP-Rule" id="MF_04032"/>
    </source>
</evidence>
<keyword id="KW-1015">Disulfide bond</keyword>
<keyword id="KW-0325">Glycoprotein</keyword>
<keyword id="KW-1032">Host cell membrane</keyword>
<keyword id="KW-1039">Host endosome</keyword>
<keyword id="KW-1040">Host Golgi apparatus</keyword>
<keyword id="KW-1043">Host membrane</keyword>
<keyword id="KW-0945">Host-virus interaction</keyword>
<keyword id="KW-0472">Membrane</keyword>
<keyword id="KW-0732">Signal</keyword>
<keyword id="KW-0812">Transmembrane</keyword>
<keyword id="KW-1133">Transmembrane helix</keyword>
<keyword id="KW-1161">Viral attachment to host cell</keyword>
<keyword id="KW-0261">Viral envelope protein</keyword>
<keyword id="KW-0946">Virion</keyword>
<keyword id="KW-1160">Virus entry into host cell</keyword>